<gene>
    <name evidence="1" type="primary">rplV</name>
    <name type="ordered locus">HAPS_1611</name>
</gene>
<feature type="chain" id="PRO_1000166064" description="Large ribosomal subunit protein uL22">
    <location>
        <begin position="1"/>
        <end position="110"/>
    </location>
</feature>
<reference key="1">
    <citation type="journal article" date="2009" name="J. Bacteriol.">
        <title>Complete genome sequence of Haemophilus parasuis SH0165.</title>
        <authorList>
            <person name="Yue M."/>
            <person name="Yang F."/>
            <person name="Yang J."/>
            <person name="Bei W."/>
            <person name="Cai X."/>
            <person name="Chen L."/>
            <person name="Dong J."/>
            <person name="Zhou R."/>
            <person name="Jin M."/>
            <person name="Jin Q."/>
            <person name="Chen H."/>
        </authorList>
    </citation>
    <scope>NUCLEOTIDE SEQUENCE [LARGE SCALE GENOMIC DNA]</scope>
    <source>
        <strain>SH0165</strain>
    </source>
</reference>
<comment type="function">
    <text evidence="1">This protein binds specifically to 23S rRNA; its binding is stimulated by other ribosomal proteins, e.g. L4, L17, and L20. It is important during the early stages of 50S assembly. It makes multiple contacts with different domains of the 23S rRNA in the assembled 50S subunit and ribosome (By similarity).</text>
</comment>
<comment type="function">
    <text evidence="1">The globular domain of the protein is located near the polypeptide exit tunnel on the outside of the subunit, while an extended beta-hairpin is found that lines the wall of the exit tunnel in the center of the 70S ribosome.</text>
</comment>
<comment type="subunit">
    <text evidence="1">Part of the 50S ribosomal subunit.</text>
</comment>
<comment type="similarity">
    <text evidence="1">Belongs to the universal ribosomal protein uL22 family.</text>
</comment>
<proteinExistence type="inferred from homology"/>
<sequence length="110" mass="12093">METIAKHRYARTSAQKARLVADLIRGKKVSAALEILTFTNKKAAALVKKVLESAIANAEHNDGADVDDLKVAKIFVDEGPSMKRVMPRAKGRADRILKRTSHITVVVSDR</sequence>
<dbReference type="EMBL" id="CP001321">
    <property type="protein sequence ID" value="ACL33162.1"/>
    <property type="molecule type" value="Genomic_DNA"/>
</dbReference>
<dbReference type="RefSeq" id="WP_005706427.1">
    <property type="nucleotide sequence ID" value="NC_011852.1"/>
</dbReference>
<dbReference type="SMR" id="B8F760"/>
<dbReference type="STRING" id="557723.HAPS_1611"/>
<dbReference type="GeneID" id="78224636"/>
<dbReference type="KEGG" id="hap:HAPS_1611"/>
<dbReference type="HOGENOM" id="CLU_083987_3_3_6"/>
<dbReference type="Proteomes" id="UP000006743">
    <property type="component" value="Chromosome"/>
</dbReference>
<dbReference type="GO" id="GO:0022625">
    <property type="term" value="C:cytosolic large ribosomal subunit"/>
    <property type="evidence" value="ECO:0007669"/>
    <property type="project" value="TreeGrafter"/>
</dbReference>
<dbReference type="GO" id="GO:0019843">
    <property type="term" value="F:rRNA binding"/>
    <property type="evidence" value="ECO:0007669"/>
    <property type="project" value="UniProtKB-UniRule"/>
</dbReference>
<dbReference type="GO" id="GO:0003735">
    <property type="term" value="F:structural constituent of ribosome"/>
    <property type="evidence" value="ECO:0007669"/>
    <property type="project" value="InterPro"/>
</dbReference>
<dbReference type="GO" id="GO:0006412">
    <property type="term" value="P:translation"/>
    <property type="evidence" value="ECO:0007669"/>
    <property type="project" value="UniProtKB-UniRule"/>
</dbReference>
<dbReference type="CDD" id="cd00336">
    <property type="entry name" value="Ribosomal_L22"/>
    <property type="match status" value="1"/>
</dbReference>
<dbReference type="FunFam" id="3.90.470.10:FF:000001">
    <property type="entry name" value="50S ribosomal protein L22"/>
    <property type="match status" value="1"/>
</dbReference>
<dbReference type="Gene3D" id="3.90.470.10">
    <property type="entry name" value="Ribosomal protein L22/L17"/>
    <property type="match status" value="1"/>
</dbReference>
<dbReference type="HAMAP" id="MF_01331_B">
    <property type="entry name" value="Ribosomal_uL22_B"/>
    <property type="match status" value="1"/>
</dbReference>
<dbReference type="InterPro" id="IPR001063">
    <property type="entry name" value="Ribosomal_uL22"/>
</dbReference>
<dbReference type="InterPro" id="IPR005727">
    <property type="entry name" value="Ribosomal_uL22_bac/chlpt-type"/>
</dbReference>
<dbReference type="InterPro" id="IPR047867">
    <property type="entry name" value="Ribosomal_uL22_bac/org-type"/>
</dbReference>
<dbReference type="InterPro" id="IPR018260">
    <property type="entry name" value="Ribosomal_uL22_CS"/>
</dbReference>
<dbReference type="InterPro" id="IPR036394">
    <property type="entry name" value="Ribosomal_uL22_sf"/>
</dbReference>
<dbReference type="NCBIfam" id="TIGR01044">
    <property type="entry name" value="rplV_bact"/>
    <property type="match status" value="1"/>
</dbReference>
<dbReference type="PANTHER" id="PTHR13501">
    <property type="entry name" value="CHLOROPLAST 50S RIBOSOMAL PROTEIN L22-RELATED"/>
    <property type="match status" value="1"/>
</dbReference>
<dbReference type="PANTHER" id="PTHR13501:SF8">
    <property type="entry name" value="LARGE RIBOSOMAL SUBUNIT PROTEIN UL22M"/>
    <property type="match status" value="1"/>
</dbReference>
<dbReference type="Pfam" id="PF00237">
    <property type="entry name" value="Ribosomal_L22"/>
    <property type="match status" value="1"/>
</dbReference>
<dbReference type="SUPFAM" id="SSF54843">
    <property type="entry name" value="Ribosomal protein L22"/>
    <property type="match status" value="1"/>
</dbReference>
<dbReference type="PROSITE" id="PS00464">
    <property type="entry name" value="RIBOSOMAL_L22"/>
    <property type="match status" value="1"/>
</dbReference>
<evidence type="ECO:0000255" key="1">
    <source>
        <dbReference type="HAMAP-Rule" id="MF_01331"/>
    </source>
</evidence>
<evidence type="ECO:0000305" key="2"/>
<accession>B8F760</accession>
<protein>
    <recommendedName>
        <fullName evidence="1">Large ribosomal subunit protein uL22</fullName>
    </recommendedName>
    <alternativeName>
        <fullName evidence="2">50S ribosomal protein L22</fullName>
    </alternativeName>
</protein>
<organism>
    <name type="scientific">Glaesserella parasuis serovar 5 (strain SH0165)</name>
    <name type="common">Haemophilus parasuis</name>
    <dbReference type="NCBI Taxonomy" id="557723"/>
    <lineage>
        <taxon>Bacteria</taxon>
        <taxon>Pseudomonadati</taxon>
        <taxon>Pseudomonadota</taxon>
        <taxon>Gammaproteobacteria</taxon>
        <taxon>Pasteurellales</taxon>
        <taxon>Pasteurellaceae</taxon>
        <taxon>Glaesserella</taxon>
    </lineage>
</organism>
<keyword id="KW-1185">Reference proteome</keyword>
<keyword id="KW-0687">Ribonucleoprotein</keyword>
<keyword id="KW-0689">Ribosomal protein</keyword>
<keyword id="KW-0694">RNA-binding</keyword>
<keyword id="KW-0699">rRNA-binding</keyword>
<name>RL22_GLAP5</name>